<accession>Q8KUU5</accession>
<feature type="chain" id="PRO_0000455331" description="Cysteine desulfurase">
    <location>
        <begin position="1"/>
        <end position="626"/>
    </location>
</feature>
<feature type="region of interest" description="Cargo-loading domain" evidence="3">
    <location>
        <begin position="1"/>
        <end position="225"/>
    </location>
</feature>
<feature type="region of interest" description="Disordered" evidence="2">
    <location>
        <begin position="1"/>
        <end position="21"/>
    </location>
</feature>
<feature type="region of interest" description="Disordered" evidence="2">
    <location>
        <begin position="41"/>
        <end position="64"/>
    </location>
</feature>
<feature type="region of interest" description="Cysteine desulfurase domain" evidence="6">
    <location>
        <begin position="226"/>
        <end position="626"/>
    </location>
</feature>
<feature type="active site" description="Cysteine persulfide intermediate" evidence="1">
    <location>
        <position position="582"/>
    </location>
</feature>
<feature type="modified residue" description="N6-(pyridoxal phosphate)lysine" evidence="1">
    <location>
        <position position="444"/>
    </location>
</feature>
<feature type="mutagenesis site" description="No longer loaded into nanocompartments, no change in catalytic efficiency." evidence="3">
    <location>
        <begin position="1"/>
        <end position="225"/>
    </location>
</feature>
<protein>
    <recommendedName>
        <fullName evidence="4">Cysteine desulfurase</fullName>
        <shortName evidence="4">CyD</shortName>
        <ecNumber evidence="3">2.8.1.7</ecNumber>
    </recommendedName>
</protein>
<comment type="function">
    <text evidence="3">Cargo protein of a type 2A encapsulin nanocompartment probably involved in sulfur metabolism. Cysteine desulfurases mobilize the sulfur from L-cysteine to yield L-alanine, an essential step in sulfur metabolism for biosynthesis of a variety of sulfur-containing biomolecules.</text>
</comment>
<comment type="catalytic activity">
    <reaction evidence="3">
        <text>(sulfur carrier)-H + L-cysteine = (sulfur carrier)-SH + L-alanine</text>
        <dbReference type="Rhea" id="RHEA:43892"/>
        <dbReference type="Rhea" id="RHEA-COMP:14737"/>
        <dbReference type="Rhea" id="RHEA-COMP:14739"/>
        <dbReference type="ChEBI" id="CHEBI:29917"/>
        <dbReference type="ChEBI" id="CHEBI:35235"/>
        <dbReference type="ChEBI" id="CHEBI:57972"/>
        <dbReference type="ChEBI" id="CHEBI:64428"/>
        <dbReference type="EC" id="2.8.1.7"/>
    </reaction>
</comment>
<comment type="cofactor">
    <cofactor evidence="1">
        <name>pyridoxal 5'-phosphate</name>
        <dbReference type="ChEBI" id="CHEBI:597326"/>
    </cofactor>
</comment>
<comment type="activity regulation">
    <text evidence="3">Encapsulated enzyme is 7-fold more active than encapsulated enzyme.</text>
</comment>
<comment type="biophysicochemical properties">
    <kinetics>
        <text evidence="3">kcat for encapulated enzyme is 67 sec(-1), for unencapsulated enzyme is 10 sec(-1).</text>
    </kinetics>
</comment>
<comment type="subunit">
    <text evidence="3">There are 1-2 copies of this protein in each type 2A encapsulin shell.</text>
</comment>
<comment type="subcellular location">
    <subcellularLocation>
        <location evidence="3">Encapsulin nanocompartment</location>
    </subcellularLocation>
</comment>
<comment type="induction">
    <text evidence="3">Present in when grown in sulfur-containing media, induced 42-fold after 48 hours of sulfur starvation (at protein level).</text>
</comment>
<comment type="domain">
    <text evidence="3">Has a disordered N-terminal domain of about 225 residues that functions as a cargo-loading domain (tested with GFP) and a conserved C-terminal cysteine desulfurase domain. The first 100 residues also function as a cargo-loading domain but not as well as the first 225 residues.</text>
</comment>
<comment type="disruption phenotype">
    <text evidence="3">No growth phenotype for a double srpI-cyd deletion mutant in the presence or absence of sulfur.</text>
</comment>
<comment type="similarity">
    <text evidence="5">Belongs to the class-V pyridoxal-phosphate-dependent aminotransferase family. Csd subfamily.</text>
</comment>
<organism>
    <name type="scientific">Synechococcus elongatus (strain ATCC 33912 / PCC 7942 / FACHB-805)</name>
    <name type="common">Anacystis nidulans R2</name>
    <dbReference type="NCBI Taxonomy" id="1140"/>
    <lineage>
        <taxon>Bacteria</taxon>
        <taxon>Bacillati</taxon>
        <taxon>Cyanobacteriota</taxon>
        <taxon>Cyanophyceae</taxon>
        <taxon>Synechococcales</taxon>
        <taxon>Synechococcaceae</taxon>
        <taxon>Synechococcus</taxon>
    </lineage>
</organism>
<evidence type="ECO:0000250" key="1">
    <source>
        <dbReference type="UniProtKB" id="P77444"/>
    </source>
</evidence>
<evidence type="ECO:0000256" key="2">
    <source>
        <dbReference type="SAM" id="MobiDB-lite"/>
    </source>
</evidence>
<evidence type="ECO:0000269" key="3">
    <source>
    </source>
</evidence>
<evidence type="ECO:0000303" key="4">
    <source>
    </source>
</evidence>
<evidence type="ECO:0000305" key="5"/>
<evidence type="ECO:0000305" key="6">
    <source>
    </source>
</evidence>
<gene>
    <name evidence="4" type="primary">cyd</name>
    <name type="ordered locus">Synpcc7942_B2661</name>
    <name type="ORF">anL36</name>
</gene>
<sequence length="626" mass="67205">MTNTVPSVPAVPNLPTQSDPFFNERSLEQLTQTVLQDLQQAGVSEAESAPTPLSVPTPALPTTSALAVPQSPTAIANVPAPPSSIDERSLAQLAQAVLQDPQLASAIASIFPSVTLPTSASVPRSVPVPPSFLPSLVPTAPPIHDEVGVIPHHQLPVPSQPTPAGLQQTASSKSGSGFYFIDEQVETAIAALHSNLTVFPQLTTSSIPTLTGAHSAGAVGFDIHQVRRDFPILQERVNGRPLVWFDNAATTQKPQVVIDRLSHYYQHENSNIHRAAHELAARSTDAYEAAREQVRHFLNAASTEEVVFVRGTTEAINLVAKSWGSQNLKEGDEIVITWLEHHANIVPWQQLSAETGARLRVVPVDDYGQVRLDEYQKLLSDRTKIVSFTQVSNALGTITPAKEIIELAHRYGAKVLLDGAQSVSHLAVDVQALDCDWFVFSGHKVFGPTGIGVLYGKQELLDATLPWQSGGNMIADVTFEKTVYQPAPARFEAGTGNIADAVGLGAALEYVQKIGLEAIAAYEHELLVHGTALLSQIPGLRLIGTAPHKAAVLSFVLEGFSPEAIGQALNREGIAVRAGHHCAQPILRRFGLETTVRPSLAFYNTFEELETLAAAIRRIQTGSLAL</sequence>
<keyword id="KW-1284">Encapsulin nanocompartment</keyword>
<keyword id="KW-0614">Plasmid</keyword>
<keyword id="KW-0663">Pyridoxal phosphate</keyword>
<keyword id="KW-1185">Reference proteome</keyword>
<keyword id="KW-0808">Transferase</keyword>
<proteinExistence type="evidence at protein level"/>
<name>CYD_SYNE7</name>
<geneLocation type="plasmid">
    <name>pANL</name>
</geneLocation>
<reference key="1">
    <citation type="submission" date="2005-08" db="EMBL/GenBank/DDBJ databases">
        <title>Complete sequence of plasmid 1 of Synechococcus elongatus PCC 7942.</title>
        <authorList>
            <consortium name="US DOE Joint Genome Institute"/>
            <person name="Copeland A."/>
            <person name="Lucas S."/>
            <person name="Lapidus A."/>
            <person name="Barry K."/>
            <person name="Detter J.C."/>
            <person name="Glavina T."/>
            <person name="Hammon N."/>
            <person name="Israni S."/>
            <person name="Pitluck S."/>
            <person name="Schmutz J."/>
            <person name="Larimer F."/>
            <person name="Land M."/>
            <person name="Kyrpides N."/>
            <person name="Lykidis A."/>
            <person name="Golden S."/>
            <person name="Richardson P."/>
        </authorList>
    </citation>
    <scope>NUCLEOTIDE SEQUENCE [LARGE SCALE GENOMIC DNA]</scope>
    <source>
        <strain>ATCC 33912 / PCC 7942 / FACHB-805</strain>
        <plasmid>pANL</plasmid>
    </source>
</reference>
<reference key="2">
    <citation type="journal article" date="2008" name="Plasmid">
        <title>The complete sequence and functional analysis of pANL, the large plasmid of the unicellular freshwater cyanobacterium Synechococcus elongatus PCC 7942.</title>
        <authorList>
            <person name="Chen Y."/>
            <person name="Holtman C.K."/>
            <person name="Magnuson R.D."/>
            <person name="Youderian P.A."/>
            <person name="Golden S.S."/>
        </authorList>
    </citation>
    <scope>NUCLEOTIDE SEQUENCE [LARGE SCALE GENOMIC DNA]</scope>
    <source>
        <strain>ATCC 33912 / PCC 7942 / FACHB-805</strain>
        <plasmid>pANL</plasmid>
    </source>
</reference>
<reference key="3">
    <citation type="journal article" date="2021" name="Elife">
        <title>Discovery and characterization of a novel family of prokaryotic nanocompartments involved in sulfur metabolism.</title>
        <authorList>
            <person name="Nichols R.J."/>
            <person name="LaFrance B."/>
            <person name="Phillips N.R."/>
            <person name="Radford D.R."/>
            <person name="Oltrogge L.M."/>
            <person name="Valentin-Alvarado L.E."/>
            <person name="Bischoff A.J."/>
            <person name="Nogales E."/>
            <person name="Savage D.F."/>
        </authorList>
    </citation>
    <scope>FUNCTION</scope>
    <scope>CATALYTIC ACTIVITY</scope>
    <scope>ACTIVITY REGULATION</scope>
    <scope>BIOPHYSICOCHEMICAL PROPERTIES</scope>
    <scope>SUBCELLULAR LOCATION</scope>
    <scope>INDUCTION BY SULFUR STARVATION</scope>
    <scope>DOMAIN</scope>
    <scope>DISRUPTION PHENOTYPE</scope>
    <scope>MUTAGENESIS OF 1-MET--GLN-225</scope>
    <source>
        <strain>ATCC 33912 / PCC 7942 / FACHB-805</strain>
        <plasmid>pANL</plasmid>
    </source>
</reference>
<dbReference type="EC" id="2.8.1.7" evidence="3"/>
<dbReference type="EMBL" id="AF441790">
    <property type="protein sequence ID" value="AAM81163.2"/>
    <property type="molecule type" value="Genomic_DNA"/>
</dbReference>
<dbReference type="EMBL" id="CP000101">
    <property type="protein sequence ID" value="ABB58690.1"/>
    <property type="molecule type" value="Genomic_DNA"/>
</dbReference>
<dbReference type="RefSeq" id="NP_665776.2">
    <property type="nucleotide sequence ID" value="NC_004073.2"/>
</dbReference>
<dbReference type="RefSeq" id="WP_011055153.1">
    <property type="nucleotide sequence ID" value="NZ_JACJTX010000007.1"/>
</dbReference>
<dbReference type="SMR" id="Q8KUU5"/>
<dbReference type="PaxDb" id="1140-Synpcc7942_B2661"/>
<dbReference type="GeneID" id="72431520"/>
<dbReference type="KEGG" id="syf:Synpcc7942_B2661"/>
<dbReference type="eggNOG" id="COG0520">
    <property type="taxonomic scope" value="Bacteria"/>
</dbReference>
<dbReference type="HOGENOM" id="CLU_003433_7_2_3"/>
<dbReference type="OrthoDB" id="9804366at2"/>
<dbReference type="BioCyc" id="SYNEL:SYNPCC7942_B2661-MONOMER"/>
<dbReference type="Proteomes" id="UP000889800">
    <property type="component" value="Plasmid pANL"/>
</dbReference>
<dbReference type="GO" id="GO:0140737">
    <property type="term" value="C:encapsulin nanocompartment"/>
    <property type="evidence" value="ECO:0000314"/>
    <property type="project" value="UniProtKB"/>
</dbReference>
<dbReference type="GO" id="GO:0031071">
    <property type="term" value="F:cysteine desulfurase activity"/>
    <property type="evidence" value="ECO:0000314"/>
    <property type="project" value="UniProtKB"/>
</dbReference>
<dbReference type="GO" id="GO:0030170">
    <property type="term" value="F:pyridoxal phosphate binding"/>
    <property type="evidence" value="ECO:0007669"/>
    <property type="project" value="InterPro"/>
</dbReference>
<dbReference type="GO" id="GO:0006534">
    <property type="term" value="P:cysteine metabolic process"/>
    <property type="evidence" value="ECO:0007669"/>
    <property type="project" value="InterPro"/>
</dbReference>
<dbReference type="CDD" id="cd06453">
    <property type="entry name" value="SufS_like"/>
    <property type="match status" value="1"/>
</dbReference>
<dbReference type="Gene3D" id="3.90.1150.10">
    <property type="entry name" value="Aspartate Aminotransferase, domain 1"/>
    <property type="match status" value="1"/>
</dbReference>
<dbReference type="Gene3D" id="3.40.640.10">
    <property type="entry name" value="Type I PLP-dependent aspartate aminotransferase-like (Major domain)"/>
    <property type="match status" value="1"/>
</dbReference>
<dbReference type="InterPro" id="IPR000192">
    <property type="entry name" value="Aminotrans_V_dom"/>
</dbReference>
<dbReference type="InterPro" id="IPR010970">
    <property type="entry name" value="Cys_dSase_SufS"/>
</dbReference>
<dbReference type="InterPro" id="IPR015424">
    <property type="entry name" value="PyrdxlP-dep_Trfase"/>
</dbReference>
<dbReference type="InterPro" id="IPR015421">
    <property type="entry name" value="PyrdxlP-dep_Trfase_major"/>
</dbReference>
<dbReference type="InterPro" id="IPR015422">
    <property type="entry name" value="PyrdxlP-dep_Trfase_small"/>
</dbReference>
<dbReference type="NCBIfam" id="NF041166">
    <property type="entry name" value="f2_encap_cargo1"/>
    <property type="match status" value="1"/>
</dbReference>
<dbReference type="NCBIfam" id="TIGR01979">
    <property type="entry name" value="sufS"/>
    <property type="match status" value="1"/>
</dbReference>
<dbReference type="PANTHER" id="PTHR43586">
    <property type="entry name" value="CYSTEINE DESULFURASE"/>
    <property type="match status" value="1"/>
</dbReference>
<dbReference type="PANTHER" id="PTHR43586:SF8">
    <property type="entry name" value="CYSTEINE DESULFURASE 1, CHLOROPLASTIC"/>
    <property type="match status" value="1"/>
</dbReference>
<dbReference type="Pfam" id="PF00266">
    <property type="entry name" value="Aminotran_5"/>
    <property type="match status" value="1"/>
</dbReference>
<dbReference type="SUPFAM" id="SSF53383">
    <property type="entry name" value="PLP-dependent transferases"/>
    <property type="match status" value="1"/>
</dbReference>